<evidence type="ECO:0000255" key="1">
    <source>
        <dbReference type="HAMAP-Rule" id="MF_00137"/>
    </source>
</evidence>
<comment type="catalytic activity">
    <reaction evidence="1">
        <text>5-amino-1-(5-phospho-D-ribosyl)imidazole-4-carboxylate + L-aspartate + ATP = (2S)-2-[5-amino-1-(5-phospho-beta-D-ribosyl)imidazole-4-carboxamido]succinate + ADP + phosphate + 2 H(+)</text>
        <dbReference type="Rhea" id="RHEA:22628"/>
        <dbReference type="ChEBI" id="CHEBI:15378"/>
        <dbReference type="ChEBI" id="CHEBI:29991"/>
        <dbReference type="ChEBI" id="CHEBI:30616"/>
        <dbReference type="ChEBI" id="CHEBI:43474"/>
        <dbReference type="ChEBI" id="CHEBI:58443"/>
        <dbReference type="ChEBI" id="CHEBI:77657"/>
        <dbReference type="ChEBI" id="CHEBI:456216"/>
        <dbReference type="EC" id="6.3.2.6"/>
    </reaction>
</comment>
<comment type="pathway">
    <text evidence="1">Purine metabolism; IMP biosynthesis via de novo pathway; 5-amino-1-(5-phospho-D-ribosyl)imidazole-4-carboxamide from 5-amino-1-(5-phospho-D-ribosyl)imidazole-4-carboxylate: step 1/2.</text>
</comment>
<comment type="similarity">
    <text evidence="1">Belongs to the SAICAR synthetase family.</text>
</comment>
<accession>B2V3B9</accession>
<keyword id="KW-0067">ATP-binding</keyword>
<keyword id="KW-0436">Ligase</keyword>
<keyword id="KW-0547">Nucleotide-binding</keyword>
<keyword id="KW-0658">Purine biosynthesis</keyword>
<gene>
    <name evidence="1" type="primary">purC</name>
    <name type="ordered locus">CLH_1039</name>
</gene>
<name>PUR7_CLOBA</name>
<sequence>MEKLEMLYEGKAKQIYATDKADEVVIYYKDDATAFNGEKKGQITDKGVMNNKITSILFEQLEKQGIKTHFIKKLNDREQLCKKVEIVPLEVIVRNVAAGSMAKRLGLEEGTKLKTTVFEFSYKDDELGDPLINSYHAVAIGAATFEEIDTILEMTAKINNILKEAFAKENINLIDFKIEFGKCADGTIVLADEISPDTCRFWDATTGEKLDKDRFRRDLGNVEDAYIEILKRISK</sequence>
<reference key="1">
    <citation type="submission" date="2008-05" db="EMBL/GenBank/DDBJ databases">
        <title>Complete genome sequence of Clostridium botulinum E3 str. Alaska E43.</title>
        <authorList>
            <person name="Brinkac L.M."/>
            <person name="Brown J.L."/>
            <person name="Bruce D."/>
            <person name="Detter C."/>
            <person name="Munk C."/>
            <person name="Smith L.A."/>
            <person name="Smith T.J."/>
            <person name="Sutton G."/>
            <person name="Brettin T.S."/>
        </authorList>
    </citation>
    <scope>NUCLEOTIDE SEQUENCE [LARGE SCALE GENOMIC DNA]</scope>
    <source>
        <strain>Alaska E43 / Type E3</strain>
    </source>
</reference>
<proteinExistence type="inferred from homology"/>
<feature type="chain" id="PRO_1000095973" description="Phosphoribosylaminoimidazole-succinocarboxamide synthase">
    <location>
        <begin position="1"/>
        <end position="235"/>
    </location>
</feature>
<organism>
    <name type="scientific">Clostridium botulinum (strain Alaska E43 / Type E3)</name>
    <dbReference type="NCBI Taxonomy" id="508767"/>
    <lineage>
        <taxon>Bacteria</taxon>
        <taxon>Bacillati</taxon>
        <taxon>Bacillota</taxon>
        <taxon>Clostridia</taxon>
        <taxon>Eubacteriales</taxon>
        <taxon>Clostridiaceae</taxon>
        <taxon>Clostridium</taxon>
    </lineage>
</organism>
<protein>
    <recommendedName>
        <fullName evidence="1">Phosphoribosylaminoimidazole-succinocarboxamide synthase</fullName>
        <ecNumber evidence="1">6.3.2.6</ecNumber>
    </recommendedName>
    <alternativeName>
        <fullName evidence="1">SAICAR synthetase</fullName>
    </alternativeName>
</protein>
<dbReference type="EC" id="6.3.2.6" evidence="1"/>
<dbReference type="EMBL" id="CP001078">
    <property type="protein sequence ID" value="ACD53164.1"/>
    <property type="molecule type" value="Genomic_DNA"/>
</dbReference>
<dbReference type="RefSeq" id="WP_003369697.1">
    <property type="nucleotide sequence ID" value="NC_010723.1"/>
</dbReference>
<dbReference type="SMR" id="B2V3B9"/>
<dbReference type="KEGG" id="cbt:CLH_1039"/>
<dbReference type="HOGENOM" id="CLU_061495_2_0_9"/>
<dbReference type="UniPathway" id="UPA00074">
    <property type="reaction ID" value="UER00131"/>
</dbReference>
<dbReference type="GO" id="GO:0005524">
    <property type="term" value="F:ATP binding"/>
    <property type="evidence" value="ECO:0007669"/>
    <property type="project" value="UniProtKB-KW"/>
</dbReference>
<dbReference type="GO" id="GO:0004639">
    <property type="term" value="F:phosphoribosylaminoimidazolesuccinocarboxamide synthase activity"/>
    <property type="evidence" value="ECO:0007669"/>
    <property type="project" value="UniProtKB-UniRule"/>
</dbReference>
<dbReference type="GO" id="GO:0006189">
    <property type="term" value="P:'de novo' IMP biosynthetic process"/>
    <property type="evidence" value="ECO:0007669"/>
    <property type="project" value="UniProtKB-UniRule"/>
</dbReference>
<dbReference type="GO" id="GO:0009236">
    <property type="term" value="P:cobalamin biosynthetic process"/>
    <property type="evidence" value="ECO:0007669"/>
    <property type="project" value="InterPro"/>
</dbReference>
<dbReference type="CDD" id="cd01415">
    <property type="entry name" value="SAICAR_synt_PurC"/>
    <property type="match status" value="1"/>
</dbReference>
<dbReference type="FunFam" id="3.30.200.20:FF:000189">
    <property type="entry name" value="Phosphoribosylaminoimidazole-succinocarboxamide synthase"/>
    <property type="match status" value="1"/>
</dbReference>
<dbReference type="FunFam" id="3.30.470.20:FF:000006">
    <property type="entry name" value="Phosphoribosylaminoimidazole-succinocarboxamide synthase"/>
    <property type="match status" value="1"/>
</dbReference>
<dbReference type="Gene3D" id="3.30.470.20">
    <property type="entry name" value="ATP-grasp fold, B domain"/>
    <property type="match status" value="1"/>
</dbReference>
<dbReference type="Gene3D" id="3.30.200.20">
    <property type="entry name" value="Phosphorylase Kinase, domain 1"/>
    <property type="match status" value="1"/>
</dbReference>
<dbReference type="HAMAP" id="MF_00137">
    <property type="entry name" value="SAICAR_synth"/>
    <property type="match status" value="1"/>
</dbReference>
<dbReference type="InterPro" id="IPR028923">
    <property type="entry name" value="SAICAR_synt/ADE2_N"/>
</dbReference>
<dbReference type="InterPro" id="IPR033934">
    <property type="entry name" value="SAICAR_synt_PurC"/>
</dbReference>
<dbReference type="InterPro" id="IPR001636">
    <property type="entry name" value="SAICAR_synth"/>
</dbReference>
<dbReference type="InterPro" id="IPR050089">
    <property type="entry name" value="SAICAR_synthetase"/>
</dbReference>
<dbReference type="InterPro" id="IPR018236">
    <property type="entry name" value="SAICAR_synthetase_CS"/>
</dbReference>
<dbReference type="NCBIfam" id="TIGR00081">
    <property type="entry name" value="purC"/>
    <property type="match status" value="1"/>
</dbReference>
<dbReference type="PANTHER" id="PTHR43599">
    <property type="entry name" value="MULTIFUNCTIONAL PROTEIN ADE2"/>
    <property type="match status" value="1"/>
</dbReference>
<dbReference type="PANTHER" id="PTHR43599:SF3">
    <property type="entry name" value="SI:DKEY-6E2.2"/>
    <property type="match status" value="1"/>
</dbReference>
<dbReference type="Pfam" id="PF01259">
    <property type="entry name" value="SAICAR_synt"/>
    <property type="match status" value="1"/>
</dbReference>
<dbReference type="SUPFAM" id="SSF56104">
    <property type="entry name" value="SAICAR synthase-like"/>
    <property type="match status" value="1"/>
</dbReference>
<dbReference type="PROSITE" id="PS01057">
    <property type="entry name" value="SAICAR_SYNTHETASE_1"/>
    <property type="match status" value="1"/>
</dbReference>
<dbReference type="PROSITE" id="PS01058">
    <property type="entry name" value="SAICAR_SYNTHETASE_2"/>
    <property type="match status" value="1"/>
</dbReference>